<keyword id="KW-0067">ATP-binding</keyword>
<keyword id="KW-0190">Covalent protein-DNA linkage</keyword>
<keyword id="KW-0235">DNA replication</keyword>
<keyword id="KW-0238">DNA-binding</keyword>
<keyword id="KW-0255">Endonuclease</keyword>
<keyword id="KW-0347">Helicase</keyword>
<keyword id="KW-1048">Host nucleus</keyword>
<keyword id="KW-0378">Hydrolase</keyword>
<keyword id="KW-0479">Metal-binding</keyword>
<keyword id="KW-0511">Multifunctional enzyme</keyword>
<keyword id="KW-0540">Nuclease</keyword>
<keyword id="KW-0547">Nucleotide-binding</keyword>
<keyword id="KW-0548">Nucleotidyltransferase</keyword>
<keyword id="KW-0808">Transferase</keyword>
<dbReference type="EC" id="2.7.7.-"/>
<dbReference type="EC" id="3.1.21.-"/>
<dbReference type="EC" id="3.6.1.-"/>
<dbReference type="EMBL" id="AB000920">
    <property type="protein sequence ID" value="BAA33980.1"/>
    <property type="molecule type" value="Genomic_DNA"/>
</dbReference>
<dbReference type="RefSeq" id="NP_619759.1">
    <property type="nucleotide sequence ID" value="NC_003638.1"/>
</dbReference>
<dbReference type="SMR" id="Q9Z0D5"/>
<dbReference type="KEGG" id="vg:18479552"/>
<dbReference type="Proteomes" id="UP001508043">
    <property type="component" value="Segment 1"/>
</dbReference>
<dbReference type="GO" id="GO:0042025">
    <property type="term" value="C:host cell nucleus"/>
    <property type="evidence" value="ECO:0007669"/>
    <property type="project" value="UniProtKB-SubCell"/>
</dbReference>
<dbReference type="GO" id="GO:0005524">
    <property type="term" value="F:ATP binding"/>
    <property type="evidence" value="ECO:0007669"/>
    <property type="project" value="UniProtKB-KW"/>
</dbReference>
<dbReference type="GO" id="GO:0016887">
    <property type="term" value="F:ATP hydrolysis activity"/>
    <property type="evidence" value="ECO:0007669"/>
    <property type="project" value="RHEA"/>
</dbReference>
<dbReference type="GO" id="GO:0003677">
    <property type="term" value="F:DNA binding"/>
    <property type="evidence" value="ECO:0007669"/>
    <property type="project" value="UniProtKB-KW"/>
</dbReference>
<dbReference type="GO" id="GO:0004519">
    <property type="term" value="F:endonuclease activity"/>
    <property type="evidence" value="ECO:0007669"/>
    <property type="project" value="UniProtKB-KW"/>
</dbReference>
<dbReference type="GO" id="GO:0046872">
    <property type="term" value="F:metal ion binding"/>
    <property type="evidence" value="ECO:0007669"/>
    <property type="project" value="UniProtKB-KW"/>
</dbReference>
<dbReference type="GO" id="GO:0016779">
    <property type="term" value="F:nucleotidyltransferase activity"/>
    <property type="evidence" value="ECO:0007669"/>
    <property type="project" value="UniProtKB-KW"/>
</dbReference>
<dbReference type="GO" id="GO:0003723">
    <property type="term" value="F:RNA binding"/>
    <property type="evidence" value="ECO:0007669"/>
    <property type="project" value="InterPro"/>
</dbReference>
<dbReference type="GO" id="GO:0003724">
    <property type="term" value="F:RNA helicase activity"/>
    <property type="evidence" value="ECO:0007669"/>
    <property type="project" value="InterPro"/>
</dbReference>
<dbReference type="GO" id="GO:0006260">
    <property type="term" value="P:DNA replication"/>
    <property type="evidence" value="ECO:0007669"/>
    <property type="project" value="UniProtKB-KW"/>
</dbReference>
<dbReference type="Gene3D" id="3.40.1310.20">
    <property type="match status" value="1"/>
</dbReference>
<dbReference type="InterPro" id="IPR049912">
    <property type="entry name" value="CRESS_DNA_REP"/>
</dbReference>
<dbReference type="InterPro" id="IPR000605">
    <property type="entry name" value="Helicase_SF3_ssDNA/RNA_vir"/>
</dbReference>
<dbReference type="Pfam" id="PF00910">
    <property type="entry name" value="RNA_helicase"/>
    <property type="match status" value="1"/>
</dbReference>
<dbReference type="Pfam" id="PF02407">
    <property type="entry name" value="Viral_Rep"/>
    <property type="match status" value="1"/>
</dbReference>
<dbReference type="PROSITE" id="PS52020">
    <property type="entry name" value="CRESS_DNA_REP"/>
    <property type="match status" value="1"/>
</dbReference>
<proteinExistence type="inferred from homology"/>
<gene>
    <name type="primary">C1</name>
</gene>
<sequence>MPTLQGTFWCFTLNFSGDAPSLSFNERVQYACWQHERVSHDHLQGYIQMKKRSTLKMMKELLPGAHLEVSKGTPEEASDYAMKEETRVAGPWTYGELLKKGSNKRKLLDRYKENPEDMELEDPAKARRCRAKIDKEKFIAEFKVEDDEQEWKKILEKEIEKIASPRSILWVYGPQGGEGKTSKAKELITRGWFYTRGGKKDDVAYSYVEDPTRHVVFDIPRDMQEYCNYSLIEMLKDRIIISNKYEPITNCQVYNIHVIVMANFLPDVTKISEDRIKIIYC</sequence>
<comment type="function">
    <text evidence="1">Initiates and terminates the replication only of its own subviral DNA molecule. The closed circular ssDNA genome is first converted to a superhelical dsDNA. Rep binds a specific hairpin at the genome origin of replication. Introduces an endonucleolytic nick within the intergenic region of the genome, thereby initiating the rolling circle replication (RCR). Following cleavage, binds covalently to the 5'-phosphate of DNA as a tyrosyl ester. The cleavage gives rise to a free 3'-OH that serves as a primer for the cellular DNA polymerase. The polymerase synthesizes the (+) strand DNA by rolling circle mechanism. After one round of replication, a Rep-catalyzed nucleotidyl transfer reaction releases a circular single-stranded virus genome, thereby terminating the replication. Displays origin-specific DNA cleavage, nucleotidyl transferase, ATPase and helicase activities (By similarity).</text>
</comment>
<comment type="catalytic activity">
    <reaction>
        <text>ATP + H2O = ADP + phosphate + H(+)</text>
        <dbReference type="Rhea" id="RHEA:13065"/>
        <dbReference type="ChEBI" id="CHEBI:15377"/>
        <dbReference type="ChEBI" id="CHEBI:15378"/>
        <dbReference type="ChEBI" id="CHEBI:30616"/>
        <dbReference type="ChEBI" id="CHEBI:43474"/>
        <dbReference type="ChEBI" id="CHEBI:456216"/>
    </reaction>
</comment>
<comment type="cofactor">
    <cofactor evidence="1">
        <name>Mg(2+)</name>
        <dbReference type="ChEBI" id="CHEBI:18420"/>
    </cofactor>
    <cofactor evidence="1">
        <name>Mn(2+)</name>
        <dbReference type="ChEBI" id="CHEBI:29035"/>
    </cofactor>
    <text evidence="1">Divalent metal cations, possibly Mg(2+) or Mn(2+).</text>
</comment>
<comment type="subunit">
    <text evidence="1 4">Homooligomer (Potential). Rep binds to repeated DNA motifs (iterons) (By similarity).</text>
</comment>
<comment type="subcellular location">
    <subcellularLocation>
        <location evidence="4">Host nucleus</location>
    </subcellularLocation>
</comment>
<comment type="domain">
    <text>There are 3 rolling circle replication (RCR) motifs. RCR-2 is probably involved in metal coordination. RCR-3 is required for phosphodiester bond cleavage for initiation of RCR.</text>
</comment>
<comment type="miscellaneous">
    <text>The genome of nanoviruses is composed of six to eight segments. In addition, some isolates contain subviral DNAs.</text>
</comment>
<comment type="similarity">
    <text evidence="4">Belongs to the nanoviridea/circoviridae replication-associated protein family.</text>
</comment>
<comment type="caution">
    <text evidence="4">This protein is encoded by a subviral DNA that is not present in all isolates of the virus.</text>
</comment>
<organism>
    <name type="scientific">Milk vetch dwarf C1 alphasatellite</name>
    <name type="common">MVDC1A</name>
    <dbReference type="NCBI Taxonomy" id="1455651"/>
    <lineage>
        <taxon>Viruses</taxon>
        <taxon>Viruses incertae sedis</taxon>
        <taxon>Alphasatellitidae</taxon>
        <taxon>Nanoalphasatellitinae</taxon>
        <taxon>Mivedwarsatellite</taxon>
        <taxon>Milk vetch dwarf China alphasatellite</taxon>
    </lineage>
</organism>
<name>REP1_MVDC1</name>
<protein>
    <recommendedName>
        <fullName>Para-Rep C1</fullName>
        <shortName>Rep1</shortName>
        <ecNumber>2.7.7.-</ecNumber>
        <ecNumber>3.1.21.-</ecNumber>
        <ecNumber>3.6.1.-</ecNumber>
    </recommendedName>
    <alternativeName>
        <fullName>Replication-associated protein of non-essential DNA C1</fullName>
    </alternativeName>
</protein>
<accession>Q9Z0D5</accession>
<evidence type="ECO:0000250" key="1"/>
<evidence type="ECO:0000255" key="2"/>
<evidence type="ECO:0000255" key="3">
    <source>
        <dbReference type="PROSITE-ProRule" id="PRU01364"/>
    </source>
</evidence>
<evidence type="ECO:0000305" key="4"/>
<reference key="1">
    <citation type="journal article" date="1998" name="J. Gen. Virol.">
        <title>Sequences of ten circular ssDNA components associated with the milk vetch dwarf virus genome.</title>
        <authorList>
            <person name="Sano Y."/>
            <person name="Wada M."/>
            <person name="Hashimoto Y."/>
            <person name="Matsumoto T."/>
            <person name="Kojima M."/>
        </authorList>
    </citation>
    <scope>NUCLEOTIDE SEQUENCE [GENOMIC DNA]</scope>
</reference>
<feature type="chain" id="PRO_0000378519" description="Para-Rep C1">
    <location>
        <begin position="1"/>
        <end position="281"/>
    </location>
</feature>
<feature type="domain" description="CRESS-DNA virus Rep endonuclease" evidence="3">
    <location>
        <begin position="3"/>
        <end position="97"/>
    </location>
</feature>
<feature type="short sequence motif" description="RCR-1" evidence="3">
    <location>
        <begin position="10"/>
        <end position="13"/>
    </location>
</feature>
<feature type="short sequence motif" description="RCR-2" evidence="3">
    <location>
        <begin position="42"/>
        <end position="44"/>
    </location>
</feature>
<feature type="short sequence motif" description="Nuclear localization signal" evidence="2">
    <location>
        <begin position="51"/>
        <end position="71"/>
    </location>
</feature>
<feature type="short sequence motif" description="RCR-3" evidence="3">
    <location>
        <begin position="80"/>
        <end position="83"/>
    </location>
</feature>
<feature type="short sequence motif" description="Nuclear localization signal" evidence="2">
    <location>
        <begin position="97"/>
        <end position="103"/>
    </location>
</feature>
<feature type="active site" description="For DNA cleavage activity" evidence="3">
    <location>
        <position position="80"/>
    </location>
</feature>
<feature type="binding site" evidence="2">
    <location>
        <position position="36"/>
    </location>
    <ligand>
        <name>a divalent metal cation</name>
        <dbReference type="ChEBI" id="CHEBI:60240"/>
    </ligand>
</feature>
<feature type="binding site" evidence="2">
    <location>
        <position position="42"/>
    </location>
    <ligand>
        <name>a divalent metal cation</name>
        <dbReference type="ChEBI" id="CHEBI:60240"/>
    </ligand>
</feature>
<feature type="binding site" evidence="2">
    <location>
        <position position="85"/>
    </location>
    <ligand>
        <name>a divalent metal cation</name>
        <dbReference type="ChEBI" id="CHEBI:60240"/>
    </ligand>
</feature>
<feature type="binding site" evidence="1">
    <location>
        <begin position="173"/>
        <end position="181"/>
    </location>
    <ligand>
        <name>ATP</name>
        <dbReference type="ChEBI" id="CHEBI:30616"/>
    </ligand>
</feature>